<keyword id="KW-0378">Hydrolase</keyword>
<keyword id="KW-0719">Serine esterase</keyword>
<feature type="chain" id="PRO_0000341663" description="S-formylglutathione hydrolase FrmB">
    <location>
        <begin position="1"/>
        <end position="277"/>
    </location>
</feature>
<feature type="active site" description="Charge relay system" evidence="1">
    <location>
        <position position="145"/>
    </location>
</feature>
<feature type="active site" description="Charge relay system" evidence="1">
    <location>
        <position position="221"/>
    </location>
</feature>
<feature type="active site" description="Charge relay system" evidence="1">
    <location>
        <position position="254"/>
    </location>
</feature>
<accession>A7ZX03</accession>
<dbReference type="EC" id="3.1.2.12"/>
<dbReference type="EMBL" id="CP000802">
    <property type="protein sequence ID" value="ABV04807.1"/>
    <property type="molecule type" value="Genomic_DNA"/>
</dbReference>
<dbReference type="RefSeq" id="WP_000419047.1">
    <property type="nucleotide sequence ID" value="NC_009800.1"/>
</dbReference>
<dbReference type="SMR" id="A7ZX03"/>
<dbReference type="ESTHER" id="ecoli-yaim">
    <property type="family name" value="A85-EsteraseD-FGH"/>
</dbReference>
<dbReference type="MEROPS" id="S09.940"/>
<dbReference type="KEGG" id="ecx:EcHS_A0420"/>
<dbReference type="HOGENOM" id="CLU_056472_0_0_6"/>
<dbReference type="GO" id="GO:0005829">
    <property type="term" value="C:cytosol"/>
    <property type="evidence" value="ECO:0007669"/>
    <property type="project" value="TreeGrafter"/>
</dbReference>
<dbReference type="GO" id="GO:0052689">
    <property type="term" value="F:carboxylic ester hydrolase activity"/>
    <property type="evidence" value="ECO:0007669"/>
    <property type="project" value="UniProtKB-KW"/>
</dbReference>
<dbReference type="GO" id="GO:0018738">
    <property type="term" value="F:S-formylglutathione hydrolase activity"/>
    <property type="evidence" value="ECO:0007669"/>
    <property type="project" value="UniProtKB-EC"/>
</dbReference>
<dbReference type="GO" id="GO:0046294">
    <property type="term" value="P:formaldehyde catabolic process"/>
    <property type="evidence" value="ECO:0007669"/>
    <property type="project" value="InterPro"/>
</dbReference>
<dbReference type="FunFam" id="3.40.50.1820:FF:000002">
    <property type="entry name" value="S-formylglutathione hydrolase"/>
    <property type="match status" value="1"/>
</dbReference>
<dbReference type="Gene3D" id="3.40.50.1820">
    <property type="entry name" value="alpha/beta hydrolase"/>
    <property type="match status" value="1"/>
</dbReference>
<dbReference type="InterPro" id="IPR029058">
    <property type="entry name" value="AB_hydrolase_fold"/>
</dbReference>
<dbReference type="InterPro" id="IPR000801">
    <property type="entry name" value="Esterase-like"/>
</dbReference>
<dbReference type="InterPro" id="IPR014186">
    <property type="entry name" value="S-formylglutathione_hydrol"/>
</dbReference>
<dbReference type="NCBIfam" id="TIGR02821">
    <property type="entry name" value="fghA_ester_D"/>
    <property type="match status" value="1"/>
</dbReference>
<dbReference type="PANTHER" id="PTHR10061">
    <property type="entry name" value="S-FORMYLGLUTATHIONE HYDROLASE"/>
    <property type="match status" value="1"/>
</dbReference>
<dbReference type="PANTHER" id="PTHR10061:SF0">
    <property type="entry name" value="S-FORMYLGLUTATHIONE HYDROLASE"/>
    <property type="match status" value="1"/>
</dbReference>
<dbReference type="Pfam" id="PF00756">
    <property type="entry name" value="Esterase"/>
    <property type="match status" value="1"/>
</dbReference>
<dbReference type="SUPFAM" id="SSF53474">
    <property type="entry name" value="alpha/beta-Hydrolases"/>
    <property type="match status" value="1"/>
</dbReference>
<organism>
    <name type="scientific">Escherichia coli O9:H4 (strain HS)</name>
    <dbReference type="NCBI Taxonomy" id="331112"/>
    <lineage>
        <taxon>Bacteria</taxon>
        <taxon>Pseudomonadati</taxon>
        <taxon>Pseudomonadota</taxon>
        <taxon>Gammaproteobacteria</taxon>
        <taxon>Enterobacterales</taxon>
        <taxon>Enterobacteriaceae</taxon>
        <taxon>Escherichia</taxon>
    </lineage>
</organism>
<proteinExistence type="inferred from homology"/>
<comment type="function">
    <text evidence="1">Serine hydrolase involved in the detoxification of formaldehyde. Hydrolyzes S-formylglutathione to glutathione and formate (By similarity).</text>
</comment>
<comment type="catalytic activity">
    <reaction>
        <text>S-formylglutathione + H2O = formate + glutathione + H(+)</text>
        <dbReference type="Rhea" id="RHEA:14961"/>
        <dbReference type="ChEBI" id="CHEBI:15377"/>
        <dbReference type="ChEBI" id="CHEBI:15378"/>
        <dbReference type="ChEBI" id="CHEBI:15740"/>
        <dbReference type="ChEBI" id="CHEBI:57688"/>
        <dbReference type="ChEBI" id="CHEBI:57925"/>
        <dbReference type="EC" id="3.1.2.12"/>
    </reaction>
</comment>
<comment type="similarity">
    <text evidence="2">Belongs to the esterase D family.</text>
</comment>
<protein>
    <recommendedName>
        <fullName>S-formylglutathione hydrolase FrmB</fullName>
        <shortName>FGH</shortName>
        <ecNumber>3.1.2.12</ecNumber>
    </recommendedName>
</protein>
<name>SFGH1_ECOHS</name>
<evidence type="ECO:0000250" key="1"/>
<evidence type="ECO:0000305" key="2"/>
<gene>
    <name type="primary">frmB</name>
    <name type="ordered locus">EcHS_A0420</name>
</gene>
<sequence length="277" mass="31371">MELIEKHASFGGWQNVYRHYSQSLKCEMNVGVYLPPKAANEKLPVLYWLSGLTCNEQNFITKSGMQRYAAEHNIIVVAPDTSPRGSHVADADRYDLGQGAGFYLNATQAPWNEHYKMYDYIRNELPDLVMQHFPATTRKSISGHSMGGLGALVLALRNPDEYVSVSAFSPIVSPSQAPWGQQAFAAYLGENKDAWLDYDPVSLISQGQRVAEIMVDQGLSDDFYAEQLRTPNLEKICQEMNIKTLIRYHEGYDHSYYFVSSFIGEHIAYHANKLNMR</sequence>
<reference key="1">
    <citation type="journal article" date="2008" name="J. Bacteriol.">
        <title>The pangenome structure of Escherichia coli: comparative genomic analysis of E. coli commensal and pathogenic isolates.</title>
        <authorList>
            <person name="Rasko D.A."/>
            <person name="Rosovitz M.J."/>
            <person name="Myers G.S.A."/>
            <person name="Mongodin E.F."/>
            <person name="Fricke W.F."/>
            <person name="Gajer P."/>
            <person name="Crabtree J."/>
            <person name="Sebaihia M."/>
            <person name="Thomson N.R."/>
            <person name="Chaudhuri R."/>
            <person name="Henderson I.R."/>
            <person name="Sperandio V."/>
            <person name="Ravel J."/>
        </authorList>
    </citation>
    <scope>NUCLEOTIDE SEQUENCE [LARGE SCALE GENOMIC DNA]</scope>
    <source>
        <strain>HS</strain>
    </source>
</reference>